<gene>
    <name evidence="1" type="primary">atpC</name>
    <name type="ordered locus">SPCG_1491</name>
</gene>
<name>ATPE_STRPS</name>
<protein>
    <recommendedName>
        <fullName evidence="1">ATP synthase epsilon chain</fullName>
    </recommendedName>
    <alternativeName>
        <fullName evidence="1">ATP synthase F1 sector epsilon subunit</fullName>
    </alternativeName>
    <alternativeName>
        <fullName evidence="1">F-ATPase epsilon subunit</fullName>
    </alternativeName>
</protein>
<dbReference type="EMBL" id="CP001033">
    <property type="protein sequence ID" value="ACB90743.1"/>
    <property type="molecule type" value="Genomic_DNA"/>
</dbReference>
<dbReference type="RefSeq" id="WP_000068050.1">
    <property type="nucleotide sequence ID" value="NC_010582.1"/>
</dbReference>
<dbReference type="SMR" id="B2IQW9"/>
<dbReference type="KEGG" id="spw:SPCG_1491"/>
<dbReference type="HOGENOM" id="CLU_084338_1_0_9"/>
<dbReference type="GO" id="GO:0005886">
    <property type="term" value="C:plasma membrane"/>
    <property type="evidence" value="ECO:0007669"/>
    <property type="project" value="UniProtKB-SubCell"/>
</dbReference>
<dbReference type="GO" id="GO:0045259">
    <property type="term" value="C:proton-transporting ATP synthase complex"/>
    <property type="evidence" value="ECO:0007669"/>
    <property type="project" value="UniProtKB-KW"/>
</dbReference>
<dbReference type="GO" id="GO:0005524">
    <property type="term" value="F:ATP binding"/>
    <property type="evidence" value="ECO:0007669"/>
    <property type="project" value="UniProtKB-UniRule"/>
</dbReference>
<dbReference type="GO" id="GO:0046933">
    <property type="term" value="F:proton-transporting ATP synthase activity, rotational mechanism"/>
    <property type="evidence" value="ECO:0007669"/>
    <property type="project" value="UniProtKB-UniRule"/>
</dbReference>
<dbReference type="CDD" id="cd12152">
    <property type="entry name" value="F1-ATPase_delta"/>
    <property type="match status" value="1"/>
</dbReference>
<dbReference type="FunFam" id="1.20.5.440:FF:000001">
    <property type="entry name" value="ATP synthase epsilon chain"/>
    <property type="match status" value="1"/>
</dbReference>
<dbReference type="Gene3D" id="1.20.5.440">
    <property type="entry name" value="ATP synthase delta/epsilon subunit, C-terminal domain"/>
    <property type="match status" value="1"/>
</dbReference>
<dbReference type="Gene3D" id="2.60.15.10">
    <property type="entry name" value="F0F1 ATP synthase delta/epsilon subunit, N-terminal"/>
    <property type="match status" value="1"/>
</dbReference>
<dbReference type="HAMAP" id="MF_00530">
    <property type="entry name" value="ATP_synth_epsil_bac"/>
    <property type="match status" value="1"/>
</dbReference>
<dbReference type="InterPro" id="IPR001469">
    <property type="entry name" value="ATP_synth_F1_dsu/esu"/>
</dbReference>
<dbReference type="InterPro" id="IPR020546">
    <property type="entry name" value="ATP_synth_F1_dsu/esu_N"/>
</dbReference>
<dbReference type="InterPro" id="IPR020547">
    <property type="entry name" value="ATP_synth_F1_esu_C"/>
</dbReference>
<dbReference type="InterPro" id="IPR036771">
    <property type="entry name" value="ATPsynth_dsu/esu_N"/>
</dbReference>
<dbReference type="NCBIfam" id="TIGR01216">
    <property type="entry name" value="ATP_synt_epsi"/>
    <property type="match status" value="1"/>
</dbReference>
<dbReference type="NCBIfam" id="NF001846">
    <property type="entry name" value="PRK00571.1-3"/>
    <property type="match status" value="1"/>
</dbReference>
<dbReference type="PANTHER" id="PTHR13822">
    <property type="entry name" value="ATP SYNTHASE DELTA/EPSILON CHAIN"/>
    <property type="match status" value="1"/>
</dbReference>
<dbReference type="PANTHER" id="PTHR13822:SF10">
    <property type="entry name" value="ATP SYNTHASE EPSILON CHAIN, CHLOROPLASTIC"/>
    <property type="match status" value="1"/>
</dbReference>
<dbReference type="Pfam" id="PF00401">
    <property type="entry name" value="ATP-synt_DE"/>
    <property type="match status" value="1"/>
</dbReference>
<dbReference type="Pfam" id="PF02823">
    <property type="entry name" value="ATP-synt_DE_N"/>
    <property type="match status" value="1"/>
</dbReference>
<dbReference type="SUPFAM" id="SSF51344">
    <property type="entry name" value="Epsilon subunit of F1F0-ATP synthase N-terminal domain"/>
    <property type="match status" value="1"/>
</dbReference>
<reference key="1">
    <citation type="journal article" date="2009" name="BMC Genomics">
        <title>Genome evolution driven by host adaptations results in a more virulent and antimicrobial-resistant Streptococcus pneumoniae serotype 14.</title>
        <authorList>
            <person name="Ding F."/>
            <person name="Tang P."/>
            <person name="Hsu M.-H."/>
            <person name="Cui P."/>
            <person name="Hu S."/>
            <person name="Yu J."/>
            <person name="Chiu C.-H."/>
        </authorList>
    </citation>
    <scope>NUCLEOTIDE SEQUENCE [LARGE SCALE GENOMIC DNA]</scope>
    <source>
        <strain>CGSP14</strain>
    </source>
</reference>
<evidence type="ECO:0000255" key="1">
    <source>
        <dbReference type="HAMAP-Rule" id="MF_00530"/>
    </source>
</evidence>
<feature type="chain" id="PRO_1000127899" description="ATP synthase epsilon chain">
    <location>
        <begin position="1"/>
        <end position="139"/>
    </location>
</feature>
<keyword id="KW-0066">ATP synthesis</keyword>
<keyword id="KW-1003">Cell membrane</keyword>
<keyword id="KW-0139">CF(1)</keyword>
<keyword id="KW-0375">Hydrogen ion transport</keyword>
<keyword id="KW-0406">Ion transport</keyword>
<keyword id="KW-0472">Membrane</keyword>
<keyword id="KW-0813">Transport</keyword>
<organism>
    <name type="scientific">Streptococcus pneumoniae (strain CGSP14)</name>
    <dbReference type="NCBI Taxonomy" id="516950"/>
    <lineage>
        <taxon>Bacteria</taxon>
        <taxon>Bacillati</taxon>
        <taxon>Bacillota</taxon>
        <taxon>Bacilli</taxon>
        <taxon>Lactobacillales</taxon>
        <taxon>Streptococcaceae</taxon>
        <taxon>Streptococcus</taxon>
    </lineage>
</organism>
<accession>B2IQW9</accession>
<proteinExistence type="inferred from homology"/>
<sequence length="139" mass="15638">MAQLTVQIVTPDGLVYDHHASYVSVRTLDGEMGILPRHENMIAVLAVDEVKVKRIDDKDHVNWIAVNGGVIEIANDMITIVADSAERARDIDISRAERAKLRAERAIEEAQDKHLIDQERRAKIALQRAINRINVGNRL</sequence>
<comment type="function">
    <text evidence="1">Produces ATP from ADP in the presence of a proton gradient across the membrane.</text>
</comment>
<comment type="subunit">
    <text evidence="1">F-type ATPases have 2 components, CF(1) - the catalytic core - and CF(0) - the membrane proton channel. CF(1) has five subunits: alpha(3), beta(3), gamma(1), delta(1), epsilon(1). CF(0) has three main subunits: a, b and c.</text>
</comment>
<comment type="subcellular location">
    <subcellularLocation>
        <location evidence="1">Cell membrane</location>
        <topology evidence="1">Peripheral membrane protein</topology>
    </subcellularLocation>
</comment>
<comment type="similarity">
    <text evidence="1">Belongs to the ATPase epsilon chain family.</text>
</comment>